<name>SYD_STRP7</name>
<reference key="1">
    <citation type="journal article" date="2010" name="Genome Biol.">
        <title>Structure and dynamics of the pan-genome of Streptococcus pneumoniae and closely related species.</title>
        <authorList>
            <person name="Donati C."/>
            <person name="Hiller N.L."/>
            <person name="Tettelin H."/>
            <person name="Muzzi A."/>
            <person name="Croucher N.J."/>
            <person name="Angiuoli S.V."/>
            <person name="Oggioni M."/>
            <person name="Dunning Hotopp J.C."/>
            <person name="Hu F.Z."/>
            <person name="Riley D.R."/>
            <person name="Covacci A."/>
            <person name="Mitchell T.J."/>
            <person name="Bentley S.D."/>
            <person name="Kilian M."/>
            <person name="Ehrlich G.D."/>
            <person name="Rappuoli R."/>
            <person name="Moxon E.R."/>
            <person name="Masignani V."/>
        </authorList>
    </citation>
    <scope>NUCLEOTIDE SEQUENCE [LARGE SCALE GENOMIC DNA]</scope>
    <source>
        <strain>70585</strain>
    </source>
</reference>
<proteinExistence type="inferred from homology"/>
<protein>
    <recommendedName>
        <fullName evidence="1">Aspartate--tRNA ligase</fullName>
        <ecNumber evidence="1">6.1.1.12</ecNumber>
    </recommendedName>
    <alternativeName>
        <fullName evidence="1">Aspartyl-tRNA synthetase</fullName>
        <shortName evidence="1">AspRS</shortName>
    </alternativeName>
</protein>
<accession>C1CAU1</accession>
<gene>
    <name evidence="1" type="primary">aspS</name>
    <name type="ordered locus">SP70585_2220</name>
</gene>
<dbReference type="EC" id="6.1.1.12" evidence="1"/>
<dbReference type="EMBL" id="CP000918">
    <property type="protein sequence ID" value="ACO17582.1"/>
    <property type="molecule type" value="Genomic_DNA"/>
</dbReference>
<dbReference type="RefSeq" id="WP_000830889.1">
    <property type="nucleotide sequence ID" value="NC_012468.1"/>
</dbReference>
<dbReference type="SMR" id="C1CAU1"/>
<dbReference type="KEGG" id="snm:SP70585_2220"/>
<dbReference type="HOGENOM" id="CLU_014330_3_2_9"/>
<dbReference type="Proteomes" id="UP000002211">
    <property type="component" value="Chromosome"/>
</dbReference>
<dbReference type="GO" id="GO:0005737">
    <property type="term" value="C:cytoplasm"/>
    <property type="evidence" value="ECO:0007669"/>
    <property type="project" value="UniProtKB-SubCell"/>
</dbReference>
<dbReference type="GO" id="GO:0004815">
    <property type="term" value="F:aspartate-tRNA ligase activity"/>
    <property type="evidence" value="ECO:0007669"/>
    <property type="project" value="UniProtKB-UniRule"/>
</dbReference>
<dbReference type="GO" id="GO:0005524">
    <property type="term" value="F:ATP binding"/>
    <property type="evidence" value="ECO:0007669"/>
    <property type="project" value="UniProtKB-UniRule"/>
</dbReference>
<dbReference type="GO" id="GO:0140096">
    <property type="term" value="F:catalytic activity, acting on a protein"/>
    <property type="evidence" value="ECO:0007669"/>
    <property type="project" value="UniProtKB-ARBA"/>
</dbReference>
<dbReference type="GO" id="GO:0003676">
    <property type="term" value="F:nucleic acid binding"/>
    <property type="evidence" value="ECO:0007669"/>
    <property type="project" value="InterPro"/>
</dbReference>
<dbReference type="GO" id="GO:0016740">
    <property type="term" value="F:transferase activity"/>
    <property type="evidence" value="ECO:0007669"/>
    <property type="project" value="UniProtKB-ARBA"/>
</dbReference>
<dbReference type="GO" id="GO:0006422">
    <property type="term" value="P:aspartyl-tRNA aminoacylation"/>
    <property type="evidence" value="ECO:0007669"/>
    <property type="project" value="UniProtKB-UniRule"/>
</dbReference>
<dbReference type="CDD" id="cd00777">
    <property type="entry name" value="AspRS_core"/>
    <property type="match status" value="1"/>
</dbReference>
<dbReference type="CDD" id="cd04317">
    <property type="entry name" value="EcAspRS_like_N"/>
    <property type="match status" value="1"/>
</dbReference>
<dbReference type="Gene3D" id="3.30.930.10">
    <property type="entry name" value="Bira Bifunctional Protein, Domain 2"/>
    <property type="match status" value="1"/>
</dbReference>
<dbReference type="Gene3D" id="3.30.1360.30">
    <property type="entry name" value="GAD-like domain"/>
    <property type="match status" value="1"/>
</dbReference>
<dbReference type="Gene3D" id="2.40.50.140">
    <property type="entry name" value="Nucleic acid-binding proteins"/>
    <property type="match status" value="1"/>
</dbReference>
<dbReference type="HAMAP" id="MF_00044">
    <property type="entry name" value="Asp_tRNA_synth_type1"/>
    <property type="match status" value="1"/>
</dbReference>
<dbReference type="InterPro" id="IPR004364">
    <property type="entry name" value="Aa-tRNA-synt_II"/>
</dbReference>
<dbReference type="InterPro" id="IPR006195">
    <property type="entry name" value="aa-tRNA-synth_II"/>
</dbReference>
<dbReference type="InterPro" id="IPR045864">
    <property type="entry name" value="aa-tRNA-synth_II/BPL/LPL"/>
</dbReference>
<dbReference type="InterPro" id="IPR004524">
    <property type="entry name" value="Asp-tRNA-ligase_1"/>
</dbReference>
<dbReference type="InterPro" id="IPR047089">
    <property type="entry name" value="Asp-tRNA-ligase_1_N"/>
</dbReference>
<dbReference type="InterPro" id="IPR002312">
    <property type="entry name" value="Asp/Asn-tRNA-synth_IIb"/>
</dbReference>
<dbReference type="InterPro" id="IPR047090">
    <property type="entry name" value="AspRS_core"/>
</dbReference>
<dbReference type="InterPro" id="IPR004115">
    <property type="entry name" value="GAD-like_sf"/>
</dbReference>
<dbReference type="InterPro" id="IPR029351">
    <property type="entry name" value="GAD_dom"/>
</dbReference>
<dbReference type="InterPro" id="IPR012340">
    <property type="entry name" value="NA-bd_OB-fold"/>
</dbReference>
<dbReference type="InterPro" id="IPR004365">
    <property type="entry name" value="NA-bd_OB_tRNA"/>
</dbReference>
<dbReference type="NCBIfam" id="TIGR00459">
    <property type="entry name" value="aspS_bact"/>
    <property type="match status" value="1"/>
</dbReference>
<dbReference type="NCBIfam" id="NF001750">
    <property type="entry name" value="PRK00476.1"/>
    <property type="match status" value="1"/>
</dbReference>
<dbReference type="PANTHER" id="PTHR22594:SF5">
    <property type="entry name" value="ASPARTATE--TRNA LIGASE, MITOCHONDRIAL"/>
    <property type="match status" value="1"/>
</dbReference>
<dbReference type="PANTHER" id="PTHR22594">
    <property type="entry name" value="ASPARTYL/LYSYL-TRNA SYNTHETASE"/>
    <property type="match status" value="1"/>
</dbReference>
<dbReference type="Pfam" id="PF02938">
    <property type="entry name" value="GAD"/>
    <property type="match status" value="1"/>
</dbReference>
<dbReference type="Pfam" id="PF00152">
    <property type="entry name" value="tRNA-synt_2"/>
    <property type="match status" value="1"/>
</dbReference>
<dbReference type="Pfam" id="PF01336">
    <property type="entry name" value="tRNA_anti-codon"/>
    <property type="match status" value="1"/>
</dbReference>
<dbReference type="PRINTS" id="PR01042">
    <property type="entry name" value="TRNASYNTHASP"/>
</dbReference>
<dbReference type="SUPFAM" id="SSF55681">
    <property type="entry name" value="Class II aaRS and biotin synthetases"/>
    <property type="match status" value="1"/>
</dbReference>
<dbReference type="SUPFAM" id="SSF55261">
    <property type="entry name" value="GAD domain-like"/>
    <property type="match status" value="1"/>
</dbReference>
<dbReference type="SUPFAM" id="SSF50249">
    <property type="entry name" value="Nucleic acid-binding proteins"/>
    <property type="match status" value="1"/>
</dbReference>
<dbReference type="PROSITE" id="PS50862">
    <property type="entry name" value="AA_TRNA_LIGASE_II"/>
    <property type="match status" value="1"/>
</dbReference>
<comment type="function">
    <text evidence="1">Catalyzes the attachment of L-aspartate to tRNA(Asp) in a two-step reaction: L-aspartate is first activated by ATP to form Asp-AMP and then transferred to the acceptor end of tRNA(Asp).</text>
</comment>
<comment type="catalytic activity">
    <reaction evidence="1">
        <text>tRNA(Asp) + L-aspartate + ATP = L-aspartyl-tRNA(Asp) + AMP + diphosphate</text>
        <dbReference type="Rhea" id="RHEA:19649"/>
        <dbReference type="Rhea" id="RHEA-COMP:9660"/>
        <dbReference type="Rhea" id="RHEA-COMP:9678"/>
        <dbReference type="ChEBI" id="CHEBI:29991"/>
        <dbReference type="ChEBI" id="CHEBI:30616"/>
        <dbReference type="ChEBI" id="CHEBI:33019"/>
        <dbReference type="ChEBI" id="CHEBI:78442"/>
        <dbReference type="ChEBI" id="CHEBI:78516"/>
        <dbReference type="ChEBI" id="CHEBI:456215"/>
        <dbReference type="EC" id="6.1.1.12"/>
    </reaction>
</comment>
<comment type="subunit">
    <text evidence="1">Homodimer.</text>
</comment>
<comment type="subcellular location">
    <subcellularLocation>
        <location evidence="1">Cytoplasm</location>
    </subcellularLocation>
</comment>
<comment type="similarity">
    <text evidence="1">Belongs to the class-II aminoacyl-tRNA synthetase family. Type 1 subfamily.</text>
</comment>
<organism>
    <name type="scientific">Streptococcus pneumoniae (strain 70585)</name>
    <dbReference type="NCBI Taxonomy" id="488221"/>
    <lineage>
        <taxon>Bacteria</taxon>
        <taxon>Bacillati</taxon>
        <taxon>Bacillota</taxon>
        <taxon>Bacilli</taxon>
        <taxon>Lactobacillales</taxon>
        <taxon>Streptococcaceae</taxon>
        <taxon>Streptococcus</taxon>
    </lineage>
</organism>
<sequence length="587" mass="66176">MKRSMYAGRVREEHIGQEITLKGWVGRRRDLGGLIFIDLRDREGIMQLVINPEKVSAEVMATAESLRSEFVIEVTGQVAAREQANDKLPTGAVELNVTALIVLNTAKTTPFEIKDGIEANDDTRLRYRYLDLRRPEMLENLKLRAKVTHSIRNYLDELEFIDVETPFLSKSTPEGARDYLVPSRVNKGHFYALPQSPQITKQLLMNAGFDRYYQIVKCFRDEDLRGDRQPEFTQVDLETSFLTEQEIQDITEGLIARVMKETKGIEVTLPFPRVKYDDAMALYGSDKPDTRFDMLLQDLTEVVKGVDFKVFSEAPAVKAIVVKGAADNYSRKDIDKMTEVAKQYGAKGLAWVKVVDGELNGPVAKFLTGIQEELTTALALEDKDLVLFVADTLEVANATLGALRGRIAKELGLIDNDKFNFLWVVDWPMFEWSEEEGRYMSAHHPFTLPQEETAHELEGDLAKVRAIAYDIVLNGYELGGGSLRINQKDLQERMFKALGFSAEEANDQFGFLLEAMDYGFPPHGGLAIGLDRFVMLLAGEENIREVIAFPKNNKATDPMTQAPSTVALKQLEELSLQVEEDETNKTN</sequence>
<keyword id="KW-0030">Aminoacyl-tRNA synthetase</keyword>
<keyword id="KW-0067">ATP-binding</keyword>
<keyword id="KW-0963">Cytoplasm</keyword>
<keyword id="KW-0436">Ligase</keyword>
<keyword id="KW-0547">Nucleotide-binding</keyword>
<keyword id="KW-0648">Protein biosynthesis</keyword>
<feature type="chain" id="PRO_1000199013" description="Aspartate--tRNA ligase">
    <location>
        <begin position="1"/>
        <end position="587"/>
    </location>
</feature>
<feature type="region of interest" description="Aspartate" evidence="1">
    <location>
        <begin position="198"/>
        <end position="201"/>
    </location>
</feature>
<feature type="binding site" evidence="1">
    <location>
        <position position="174"/>
    </location>
    <ligand>
        <name>L-aspartate</name>
        <dbReference type="ChEBI" id="CHEBI:29991"/>
    </ligand>
</feature>
<feature type="binding site" evidence="1">
    <location>
        <begin position="220"/>
        <end position="222"/>
    </location>
    <ligand>
        <name>ATP</name>
        <dbReference type="ChEBI" id="CHEBI:30616"/>
    </ligand>
</feature>
<feature type="binding site" evidence="1">
    <location>
        <position position="220"/>
    </location>
    <ligand>
        <name>L-aspartate</name>
        <dbReference type="ChEBI" id="CHEBI:29991"/>
    </ligand>
</feature>
<feature type="binding site" evidence="1">
    <location>
        <position position="229"/>
    </location>
    <ligand>
        <name>ATP</name>
        <dbReference type="ChEBI" id="CHEBI:30616"/>
    </ligand>
</feature>
<feature type="binding site" evidence="1">
    <location>
        <position position="443"/>
    </location>
    <ligand>
        <name>L-aspartate</name>
        <dbReference type="ChEBI" id="CHEBI:29991"/>
    </ligand>
</feature>
<feature type="binding site" evidence="1">
    <location>
        <position position="477"/>
    </location>
    <ligand>
        <name>ATP</name>
        <dbReference type="ChEBI" id="CHEBI:30616"/>
    </ligand>
</feature>
<feature type="binding site" evidence="1">
    <location>
        <position position="484"/>
    </location>
    <ligand>
        <name>L-aspartate</name>
        <dbReference type="ChEBI" id="CHEBI:29991"/>
    </ligand>
</feature>
<feature type="binding site" evidence="1">
    <location>
        <begin position="529"/>
        <end position="532"/>
    </location>
    <ligand>
        <name>ATP</name>
        <dbReference type="ChEBI" id="CHEBI:30616"/>
    </ligand>
</feature>
<evidence type="ECO:0000255" key="1">
    <source>
        <dbReference type="HAMAP-Rule" id="MF_00044"/>
    </source>
</evidence>